<gene>
    <name evidence="1" type="primary">rpl15e</name>
    <name type="ordered locus">Mboo_1825</name>
</gene>
<name>RL15E_METB6</name>
<protein>
    <recommendedName>
        <fullName evidence="1">Large ribosomal subunit protein eL15</fullName>
    </recommendedName>
    <alternativeName>
        <fullName evidence="3">50S ribosomal protein L15e</fullName>
    </alternativeName>
</protein>
<comment type="similarity">
    <text evidence="1">Belongs to the eukaryotic ribosomal protein eL15 family.</text>
</comment>
<evidence type="ECO:0000255" key="1">
    <source>
        <dbReference type="HAMAP-Rule" id="MF_00256"/>
    </source>
</evidence>
<evidence type="ECO:0000256" key="2">
    <source>
        <dbReference type="SAM" id="MobiDB-lite"/>
    </source>
</evidence>
<evidence type="ECO:0000305" key="3"/>
<organism>
    <name type="scientific">Methanoregula boonei (strain DSM 21154 / JCM 14090 / 6A8)</name>
    <dbReference type="NCBI Taxonomy" id="456442"/>
    <lineage>
        <taxon>Archaea</taxon>
        <taxon>Methanobacteriati</taxon>
        <taxon>Methanobacteriota</taxon>
        <taxon>Stenosarchaea group</taxon>
        <taxon>Methanomicrobia</taxon>
        <taxon>Methanomicrobiales</taxon>
        <taxon>Methanoregulaceae</taxon>
        <taxon>Methanoregula</taxon>
    </lineage>
</organism>
<reference key="1">
    <citation type="journal article" date="2015" name="Microbiology">
        <title>Genome of Methanoregula boonei 6A8 reveals adaptations to oligotrophic peatland environments.</title>
        <authorList>
            <person name="Braeuer S."/>
            <person name="Cadillo-Quiroz H."/>
            <person name="Kyrpides N."/>
            <person name="Woyke T."/>
            <person name="Goodwin L."/>
            <person name="Detter C."/>
            <person name="Podell S."/>
            <person name="Yavitt J.B."/>
            <person name="Zinder S.H."/>
        </authorList>
    </citation>
    <scope>NUCLEOTIDE SEQUENCE [LARGE SCALE GENOMIC DNA]</scope>
    <source>
        <strain>DSM 21154 / JCM 14090 / 6A8</strain>
    </source>
</reference>
<proteinExistence type="inferred from homology"/>
<keyword id="KW-1185">Reference proteome</keyword>
<keyword id="KW-0687">Ribonucleoprotein</keyword>
<keyword id="KW-0689">Ribosomal protein</keyword>
<accession>A7I9D0</accession>
<feature type="chain" id="PRO_1000003425" description="Large ribosomal subunit protein eL15">
    <location>
        <begin position="1"/>
        <end position="196"/>
    </location>
</feature>
<feature type="region of interest" description="Disordered" evidence="2">
    <location>
        <begin position="156"/>
        <end position="196"/>
    </location>
</feature>
<feature type="compositionally biased region" description="Basic residues" evidence="2">
    <location>
        <begin position="167"/>
        <end position="178"/>
    </location>
</feature>
<dbReference type="EMBL" id="CP000780">
    <property type="protein sequence ID" value="ABS56341.1"/>
    <property type="molecule type" value="Genomic_DNA"/>
</dbReference>
<dbReference type="RefSeq" id="WP_012107392.1">
    <property type="nucleotide sequence ID" value="NC_009712.1"/>
</dbReference>
<dbReference type="SMR" id="A7I9D0"/>
<dbReference type="STRING" id="456442.Mboo_1825"/>
<dbReference type="GeneID" id="5411041"/>
<dbReference type="KEGG" id="mbn:Mboo_1825"/>
<dbReference type="eggNOG" id="arCOG04209">
    <property type="taxonomic scope" value="Archaea"/>
</dbReference>
<dbReference type="HOGENOM" id="CLU_080796_1_0_2"/>
<dbReference type="OrthoDB" id="8183at2157"/>
<dbReference type="Proteomes" id="UP000002408">
    <property type="component" value="Chromosome"/>
</dbReference>
<dbReference type="GO" id="GO:0022625">
    <property type="term" value="C:cytosolic large ribosomal subunit"/>
    <property type="evidence" value="ECO:0007669"/>
    <property type="project" value="TreeGrafter"/>
</dbReference>
<dbReference type="GO" id="GO:0003723">
    <property type="term" value="F:RNA binding"/>
    <property type="evidence" value="ECO:0007669"/>
    <property type="project" value="TreeGrafter"/>
</dbReference>
<dbReference type="GO" id="GO:0003735">
    <property type="term" value="F:structural constituent of ribosome"/>
    <property type="evidence" value="ECO:0007669"/>
    <property type="project" value="InterPro"/>
</dbReference>
<dbReference type="GO" id="GO:0002181">
    <property type="term" value="P:cytoplasmic translation"/>
    <property type="evidence" value="ECO:0007669"/>
    <property type="project" value="TreeGrafter"/>
</dbReference>
<dbReference type="FunFam" id="3.40.1120.10:FF:000002">
    <property type="entry name" value="50S ribosomal protein L15e"/>
    <property type="match status" value="1"/>
</dbReference>
<dbReference type="Gene3D" id="3.40.1120.10">
    <property type="entry name" value="Ribosomal protein l15e"/>
    <property type="match status" value="1"/>
</dbReference>
<dbReference type="HAMAP" id="MF_00256">
    <property type="entry name" value="Ribosomal_eL15"/>
    <property type="match status" value="1"/>
</dbReference>
<dbReference type="InterPro" id="IPR024794">
    <property type="entry name" value="Rbsml_eL15_core_dom_sf"/>
</dbReference>
<dbReference type="InterPro" id="IPR000439">
    <property type="entry name" value="Ribosomal_eL15"/>
</dbReference>
<dbReference type="InterPro" id="IPR020926">
    <property type="entry name" value="Ribosomal_eL15_arc"/>
</dbReference>
<dbReference type="InterPro" id="IPR012678">
    <property type="entry name" value="Ribosomal_uL23/eL15/eS24_sf"/>
</dbReference>
<dbReference type="NCBIfam" id="NF003269">
    <property type="entry name" value="PRK04243.1"/>
    <property type="match status" value="1"/>
</dbReference>
<dbReference type="PANTHER" id="PTHR11847:SF4">
    <property type="entry name" value="LARGE RIBOSOMAL SUBUNIT PROTEIN EL15"/>
    <property type="match status" value="1"/>
</dbReference>
<dbReference type="PANTHER" id="PTHR11847">
    <property type="entry name" value="RIBOSOMAL PROTEIN L15"/>
    <property type="match status" value="1"/>
</dbReference>
<dbReference type="Pfam" id="PF00827">
    <property type="entry name" value="Ribosomal_L15e"/>
    <property type="match status" value="1"/>
</dbReference>
<dbReference type="SMART" id="SM01384">
    <property type="entry name" value="Ribosomal_L15e"/>
    <property type="match status" value="1"/>
</dbReference>
<dbReference type="SUPFAM" id="SSF54189">
    <property type="entry name" value="Ribosomal proteins S24e, L23 and L15e"/>
    <property type="match status" value="1"/>
</dbReference>
<sequence length="196" mass="22482">MVKSMYAYVREAWARPDKSDVKALLWDRMQVWRREGSVTRIDRPTRIDRARALGYKAKQGIAVVRVHVRRGGRRASRYVRARRSARMGKNSSTPGKSIQRIAEERASVRYPNMEVLNSYWVGQDGKLKYYEVILVDGHHPSIQSDKNLAWLANPTHRGRAERGKTSAGRKGRGMRTRGRGTEKTRPSIRSHANQGK</sequence>